<organism>
    <name type="scientific">Chlorobium phaeobacteroides (strain DSM 266 / SMG 266 / 2430)</name>
    <dbReference type="NCBI Taxonomy" id="290317"/>
    <lineage>
        <taxon>Bacteria</taxon>
        <taxon>Pseudomonadati</taxon>
        <taxon>Chlorobiota</taxon>
        <taxon>Chlorobiia</taxon>
        <taxon>Chlorobiales</taxon>
        <taxon>Chlorobiaceae</taxon>
        <taxon>Chlorobium/Pelodictyon group</taxon>
        <taxon>Chlorobium</taxon>
    </lineage>
</organism>
<keyword id="KW-0963">Cytoplasm</keyword>
<keyword id="KW-0489">Methyltransferase</keyword>
<keyword id="KW-1185">Reference proteome</keyword>
<keyword id="KW-0949">S-adenosyl-L-methionine</keyword>
<keyword id="KW-0808">Transferase</keyword>
<name>PIMT_CHLPD</name>
<dbReference type="EC" id="2.1.1.77" evidence="1"/>
<dbReference type="EMBL" id="CP000492">
    <property type="protein sequence ID" value="ABL64398.1"/>
    <property type="molecule type" value="Genomic_DNA"/>
</dbReference>
<dbReference type="RefSeq" id="WP_011744232.1">
    <property type="nucleotide sequence ID" value="NC_008639.1"/>
</dbReference>
<dbReference type="SMR" id="A1BDC1"/>
<dbReference type="STRING" id="290317.Cpha266_0339"/>
<dbReference type="KEGG" id="cph:Cpha266_0339"/>
<dbReference type="eggNOG" id="COG2518">
    <property type="taxonomic scope" value="Bacteria"/>
</dbReference>
<dbReference type="HOGENOM" id="CLU_055432_2_0_10"/>
<dbReference type="OrthoDB" id="9810066at2"/>
<dbReference type="Proteomes" id="UP000008701">
    <property type="component" value="Chromosome"/>
</dbReference>
<dbReference type="GO" id="GO:0005737">
    <property type="term" value="C:cytoplasm"/>
    <property type="evidence" value="ECO:0007669"/>
    <property type="project" value="UniProtKB-SubCell"/>
</dbReference>
<dbReference type="GO" id="GO:0004719">
    <property type="term" value="F:protein-L-isoaspartate (D-aspartate) O-methyltransferase activity"/>
    <property type="evidence" value="ECO:0007669"/>
    <property type="project" value="UniProtKB-UniRule"/>
</dbReference>
<dbReference type="GO" id="GO:0032259">
    <property type="term" value="P:methylation"/>
    <property type="evidence" value="ECO:0007669"/>
    <property type="project" value="UniProtKB-KW"/>
</dbReference>
<dbReference type="GO" id="GO:0036211">
    <property type="term" value="P:protein modification process"/>
    <property type="evidence" value="ECO:0007669"/>
    <property type="project" value="UniProtKB-UniRule"/>
</dbReference>
<dbReference type="GO" id="GO:0030091">
    <property type="term" value="P:protein repair"/>
    <property type="evidence" value="ECO:0007669"/>
    <property type="project" value="UniProtKB-UniRule"/>
</dbReference>
<dbReference type="CDD" id="cd02440">
    <property type="entry name" value="AdoMet_MTases"/>
    <property type="match status" value="1"/>
</dbReference>
<dbReference type="FunFam" id="3.40.50.150:FF:000010">
    <property type="entry name" value="Protein-L-isoaspartate O-methyltransferase"/>
    <property type="match status" value="1"/>
</dbReference>
<dbReference type="Gene3D" id="3.40.50.150">
    <property type="entry name" value="Vaccinia Virus protein VP39"/>
    <property type="match status" value="1"/>
</dbReference>
<dbReference type="HAMAP" id="MF_00090">
    <property type="entry name" value="PIMT"/>
    <property type="match status" value="1"/>
</dbReference>
<dbReference type="InterPro" id="IPR000682">
    <property type="entry name" value="PCMT"/>
</dbReference>
<dbReference type="InterPro" id="IPR029063">
    <property type="entry name" value="SAM-dependent_MTases_sf"/>
</dbReference>
<dbReference type="NCBIfam" id="TIGR00080">
    <property type="entry name" value="pimt"/>
    <property type="match status" value="1"/>
</dbReference>
<dbReference type="NCBIfam" id="NF001453">
    <property type="entry name" value="PRK00312.1"/>
    <property type="match status" value="1"/>
</dbReference>
<dbReference type="PANTHER" id="PTHR11579">
    <property type="entry name" value="PROTEIN-L-ISOASPARTATE O-METHYLTRANSFERASE"/>
    <property type="match status" value="1"/>
</dbReference>
<dbReference type="PANTHER" id="PTHR11579:SF0">
    <property type="entry name" value="PROTEIN-L-ISOASPARTATE(D-ASPARTATE) O-METHYLTRANSFERASE"/>
    <property type="match status" value="1"/>
</dbReference>
<dbReference type="Pfam" id="PF01135">
    <property type="entry name" value="PCMT"/>
    <property type="match status" value="1"/>
</dbReference>
<dbReference type="SUPFAM" id="SSF53335">
    <property type="entry name" value="S-adenosyl-L-methionine-dependent methyltransferases"/>
    <property type="match status" value="1"/>
</dbReference>
<dbReference type="PROSITE" id="PS01279">
    <property type="entry name" value="PCMT"/>
    <property type="match status" value="1"/>
</dbReference>
<evidence type="ECO:0000255" key="1">
    <source>
        <dbReference type="HAMAP-Rule" id="MF_00090"/>
    </source>
</evidence>
<reference key="1">
    <citation type="submission" date="2006-12" db="EMBL/GenBank/DDBJ databases">
        <title>Complete sequence of Chlorobium phaeobacteroides DSM 266.</title>
        <authorList>
            <consortium name="US DOE Joint Genome Institute"/>
            <person name="Copeland A."/>
            <person name="Lucas S."/>
            <person name="Lapidus A."/>
            <person name="Barry K."/>
            <person name="Detter J.C."/>
            <person name="Glavina del Rio T."/>
            <person name="Hammon N."/>
            <person name="Israni S."/>
            <person name="Pitluck S."/>
            <person name="Goltsman E."/>
            <person name="Schmutz J."/>
            <person name="Larimer F."/>
            <person name="Land M."/>
            <person name="Hauser L."/>
            <person name="Mikhailova N."/>
            <person name="Li T."/>
            <person name="Overmann J."/>
            <person name="Bryant D.A."/>
            <person name="Richardson P."/>
        </authorList>
    </citation>
    <scope>NUCLEOTIDE SEQUENCE [LARGE SCALE GENOMIC DNA]</scope>
    <source>
        <strain>DSM 266 / SMG 266 / 2430</strain>
    </source>
</reference>
<proteinExistence type="inferred from homology"/>
<protein>
    <recommendedName>
        <fullName evidence="1">Protein-L-isoaspartate O-methyltransferase</fullName>
        <ecNumber evidence="1">2.1.1.77</ecNumber>
    </recommendedName>
    <alternativeName>
        <fullName evidence="1">L-isoaspartyl protein carboxyl methyltransferase</fullName>
    </alternativeName>
    <alternativeName>
        <fullName evidence="1">Protein L-isoaspartyl methyltransferase</fullName>
    </alternativeName>
    <alternativeName>
        <fullName evidence="1">Protein-beta-aspartate methyltransferase</fullName>
        <shortName evidence="1">PIMT</shortName>
    </alternativeName>
</protein>
<accession>A1BDC1</accession>
<gene>
    <name evidence="1" type="primary">pcm</name>
    <name type="ordered locus">Cpha266_0339</name>
</gene>
<comment type="function">
    <text evidence="1">Catalyzes the methyl esterification of L-isoaspartyl residues in peptides and proteins that result from spontaneous decomposition of normal L-aspartyl and L-asparaginyl residues. It plays a role in the repair and/or degradation of damaged proteins.</text>
</comment>
<comment type="catalytic activity">
    <reaction evidence="1">
        <text>[protein]-L-isoaspartate + S-adenosyl-L-methionine = [protein]-L-isoaspartate alpha-methyl ester + S-adenosyl-L-homocysteine</text>
        <dbReference type="Rhea" id="RHEA:12705"/>
        <dbReference type="Rhea" id="RHEA-COMP:12143"/>
        <dbReference type="Rhea" id="RHEA-COMP:12144"/>
        <dbReference type="ChEBI" id="CHEBI:57856"/>
        <dbReference type="ChEBI" id="CHEBI:59789"/>
        <dbReference type="ChEBI" id="CHEBI:90596"/>
        <dbReference type="ChEBI" id="CHEBI:90598"/>
        <dbReference type="EC" id="2.1.1.77"/>
    </reaction>
</comment>
<comment type="subcellular location">
    <subcellularLocation>
        <location evidence="1">Cytoplasm</location>
    </subcellularLocation>
</comment>
<comment type="similarity">
    <text evidence="1">Belongs to the methyltransferase superfamily. L-isoaspartyl/D-aspartyl protein methyltransferase family.</text>
</comment>
<feature type="chain" id="PRO_0000351844" description="Protein-L-isoaspartate O-methyltransferase">
    <location>
        <begin position="1"/>
        <end position="216"/>
    </location>
</feature>
<feature type="active site" evidence="1">
    <location>
        <position position="65"/>
    </location>
</feature>
<sequence length="216" mass="23977">MDSNSRLMTFRRREMVEKLKLSGIADNRVLAAFLSVERHRFFDKESQEYAYADGAYPIGYGQTISQPYTVACMTSLLVERSPSGKVLEIGTGSGYQAAILYALGYRVYTIERVVELSEKAEKLFSALGFSIMCRSGDGTLGWPEEAPFDGIMVTAGAPHCPETLLHQLALDGSLVVPIGAHGLQKMTVFQRKKDRFEKEVFSDFAFVPLIGREGWG</sequence>